<dbReference type="EC" id="7.-.-.-" evidence="1"/>
<dbReference type="EMBL" id="BA000003">
    <property type="protein sequence ID" value="BAB12836.1"/>
    <property type="molecule type" value="Genomic_DNA"/>
</dbReference>
<dbReference type="RefSeq" id="NP_239950.1">
    <property type="nucleotide sequence ID" value="NC_002528.1"/>
</dbReference>
<dbReference type="RefSeq" id="WP_010895956.1">
    <property type="nucleotide sequence ID" value="NZ_AP036055.1"/>
</dbReference>
<dbReference type="SMR" id="P57218"/>
<dbReference type="STRING" id="563178.BUAP5A_116"/>
<dbReference type="EnsemblBacteria" id="BAB12836">
    <property type="protein sequence ID" value="BAB12836"/>
    <property type="gene ID" value="BAB12836"/>
</dbReference>
<dbReference type="KEGG" id="buc:BU118"/>
<dbReference type="PATRIC" id="fig|107806.10.peg.127"/>
<dbReference type="eggNOG" id="COG4660">
    <property type="taxonomic scope" value="Bacteria"/>
</dbReference>
<dbReference type="HOGENOM" id="CLU_046659_1_0_6"/>
<dbReference type="BioCyc" id="BAPH107806:GBZJ-117-MONOMER"/>
<dbReference type="Proteomes" id="UP000001806">
    <property type="component" value="Chromosome"/>
</dbReference>
<dbReference type="GO" id="GO:0005886">
    <property type="term" value="C:plasma membrane"/>
    <property type="evidence" value="ECO:0007669"/>
    <property type="project" value="UniProtKB-SubCell"/>
</dbReference>
<dbReference type="GO" id="GO:0022900">
    <property type="term" value="P:electron transport chain"/>
    <property type="evidence" value="ECO:0007669"/>
    <property type="project" value="UniProtKB-UniRule"/>
</dbReference>
<dbReference type="HAMAP" id="MF_00478">
    <property type="entry name" value="RsxE_RnfE"/>
    <property type="match status" value="1"/>
</dbReference>
<dbReference type="InterPro" id="IPR003667">
    <property type="entry name" value="NqrDE/RnfAE"/>
</dbReference>
<dbReference type="InterPro" id="IPR010968">
    <property type="entry name" value="RnfE"/>
</dbReference>
<dbReference type="NCBIfam" id="NF009070">
    <property type="entry name" value="PRK12405.1"/>
    <property type="match status" value="1"/>
</dbReference>
<dbReference type="NCBIfam" id="TIGR01948">
    <property type="entry name" value="rnfE"/>
    <property type="match status" value="1"/>
</dbReference>
<dbReference type="PANTHER" id="PTHR30586">
    <property type="entry name" value="ELECTRON TRANSPORT COMPLEX PROTEIN RNFE"/>
    <property type="match status" value="1"/>
</dbReference>
<dbReference type="PANTHER" id="PTHR30586:SF0">
    <property type="entry name" value="ION-TRANSLOCATING OXIDOREDUCTASE COMPLEX SUBUNIT E"/>
    <property type="match status" value="1"/>
</dbReference>
<dbReference type="Pfam" id="PF02508">
    <property type="entry name" value="Rnf-Nqr"/>
    <property type="match status" value="1"/>
</dbReference>
<dbReference type="PIRSF" id="PIRSF006102">
    <property type="entry name" value="NQR_DE"/>
    <property type="match status" value="1"/>
</dbReference>
<gene>
    <name evidence="1" type="primary">rnfE</name>
    <name type="ordered locus">BU118</name>
</gene>
<proteinExistence type="inferred from homology"/>
<reference key="1">
    <citation type="journal article" date="2000" name="Nature">
        <title>Genome sequence of the endocellular bacterial symbiont of aphids Buchnera sp. APS.</title>
        <authorList>
            <person name="Shigenobu S."/>
            <person name="Watanabe H."/>
            <person name="Hattori M."/>
            <person name="Sakaki Y."/>
            <person name="Ishikawa H."/>
        </authorList>
    </citation>
    <scope>NUCLEOTIDE SEQUENCE [LARGE SCALE GENOMIC DNA]</scope>
    <source>
        <strain>APS</strain>
    </source>
</reference>
<accession>P57218</accession>
<name>RNFE_BUCAI</name>
<sequence length="227" mass="25171">MNIKSFLNNRLWKNNSSLVQLLGLCPVLAMTTNAINAIGLGMTTTLVLTITNTIISSFRKIIPKDLRIPIYMMIISSVVTSIEMLLHAYTFNLYQSLGIFIPLIVTNCIIVGRADLIAYKSSIVESFFDGIFIGLGSMFAMFAVGSIREILGNGTLFFGANKIISNIHSSVFFTLLDKKFTIILAVFPPGGFLILGFLIAIKNFIDLYYKKNTIKNIEQCSCSNKIK</sequence>
<protein>
    <recommendedName>
        <fullName evidence="1">Ion-translocating oxidoreductase complex subunit E</fullName>
        <ecNumber evidence="1">7.-.-.-</ecNumber>
    </recommendedName>
    <alternativeName>
        <fullName evidence="1">Rnf electron transport complex subunit E</fullName>
    </alternativeName>
</protein>
<evidence type="ECO:0000255" key="1">
    <source>
        <dbReference type="HAMAP-Rule" id="MF_00478"/>
    </source>
</evidence>
<comment type="function">
    <text evidence="1">Part of a membrane-bound complex that couples electron transfer with translocation of ions across the membrane.</text>
</comment>
<comment type="subunit">
    <text evidence="1">The complex is composed of six subunits: RnfA, RnfB, RnfC, RnfD, RnfE and RnfG.</text>
</comment>
<comment type="subcellular location">
    <subcellularLocation>
        <location evidence="1">Cell inner membrane</location>
        <topology evidence="1">Multi-pass membrane protein</topology>
    </subcellularLocation>
</comment>
<comment type="similarity">
    <text evidence="1">Belongs to the NqrDE/RnfAE family.</text>
</comment>
<keyword id="KW-0997">Cell inner membrane</keyword>
<keyword id="KW-1003">Cell membrane</keyword>
<keyword id="KW-0249">Electron transport</keyword>
<keyword id="KW-0472">Membrane</keyword>
<keyword id="KW-1185">Reference proteome</keyword>
<keyword id="KW-1278">Translocase</keyword>
<keyword id="KW-0812">Transmembrane</keyword>
<keyword id="KW-1133">Transmembrane helix</keyword>
<keyword id="KW-0813">Transport</keyword>
<feature type="chain" id="PRO_0000214266" description="Ion-translocating oxidoreductase complex subunit E">
    <location>
        <begin position="1"/>
        <end position="227"/>
    </location>
</feature>
<feature type="transmembrane region" description="Helical" evidence="1">
    <location>
        <begin position="34"/>
        <end position="56"/>
    </location>
</feature>
<feature type="transmembrane region" description="Helical" evidence="1">
    <location>
        <begin position="68"/>
        <end position="88"/>
    </location>
</feature>
<feature type="transmembrane region" description="Helical" evidence="1">
    <location>
        <begin position="91"/>
        <end position="111"/>
    </location>
</feature>
<feature type="transmembrane region" description="Helical" evidence="1">
    <location>
        <begin position="127"/>
        <end position="147"/>
    </location>
</feature>
<feature type="transmembrane region" description="Helical" evidence="1">
    <location>
        <begin position="181"/>
        <end position="201"/>
    </location>
</feature>
<organism>
    <name type="scientific">Buchnera aphidicola subsp. Acyrthosiphon pisum (strain APS)</name>
    <name type="common">Acyrthosiphon pisum symbiotic bacterium</name>
    <dbReference type="NCBI Taxonomy" id="107806"/>
    <lineage>
        <taxon>Bacteria</taxon>
        <taxon>Pseudomonadati</taxon>
        <taxon>Pseudomonadota</taxon>
        <taxon>Gammaproteobacteria</taxon>
        <taxon>Enterobacterales</taxon>
        <taxon>Erwiniaceae</taxon>
        <taxon>Buchnera</taxon>
    </lineage>
</organism>